<gene>
    <name type="primary">rplT</name>
    <name type="synonym">rl20</name>
    <name type="ordered locus">CPn_0992</name>
    <name type="ordered locus">CP_0863</name>
    <name type="ordered locus">CpB1030</name>
</gene>
<name>RL20_CHLPN</name>
<accession>Q9Z6R7</accession>
<accession>Q9JQ46</accession>
<protein>
    <recommendedName>
        <fullName evidence="2">Large ribosomal subunit protein bL20</fullName>
    </recommendedName>
    <alternativeName>
        <fullName>50S ribosomal protein L20</fullName>
    </alternativeName>
</protein>
<reference key="1">
    <citation type="journal article" date="1999" name="Nat. Genet.">
        <title>Comparative genomes of Chlamydia pneumoniae and C. trachomatis.</title>
        <authorList>
            <person name="Kalman S."/>
            <person name="Mitchell W.P."/>
            <person name="Marathe R."/>
            <person name="Lammel C.J."/>
            <person name="Fan J."/>
            <person name="Hyman R.W."/>
            <person name="Olinger L."/>
            <person name="Grimwood J."/>
            <person name="Davis R.W."/>
            <person name="Stephens R.S."/>
        </authorList>
    </citation>
    <scope>NUCLEOTIDE SEQUENCE [LARGE SCALE GENOMIC DNA]</scope>
    <source>
        <strain>CWL029</strain>
    </source>
</reference>
<reference key="2">
    <citation type="journal article" date="2000" name="Nucleic Acids Res.">
        <title>Genome sequences of Chlamydia trachomatis MoPn and Chlamydia pneumoniae AR39.</title>
        <authorList>
            <person name="Read T.D."/>
            <person name="Brunham R.C."/>
            <person name="Shen C."/>
            <person name="Gill S.R."/>
            <person name="Heidelberg J.F."/>
            <person name="White O."/>
            <person name="Hickey E.K."/>
            <person name="Peterson J.D."/>
            <person name="Utterback T.R."/>
            <person name="Berry K.J."/>
            <person name="Bass S."/>
            <person name="Linher K.D."/>
            <person name="Weidman J.F."/>
            <person name="Khouri H.M."/>
            <person name="Craven B."/>
            <person name="Bowman C."/>
            <person name="Dodson R.J."/>
            <person name="Gwinn M.L."/>
            <person name="Nelson W.C."/>
            <person name="DeBoy R.T."/>
            <person name="Kolonay J.F."/>
            <person name="McClarty G."/>
            <person name="Salzberg S.L."/>
            <person name="Eisen J.A."/>
            <person name="Fraser C.M."/>
        </authorList>
    </citation>
    <scope>NUCLEOTIDE SEQUENCE [LARGE SCALE GENOMIC DNA]</scope>
    <source>
        <strain>AR39</strain>
    </source>
</reference>
<reference key="3">
    <citation type="journal article" date="2000" name="Nucleic Acids Res.">
        <title>Comparison of whole genome sequences of Chlamydia pneumoniae J138 from Japan and CWL029 from USA.</title>
        <authorList>
            <person name="Shirai M."/>
            <person name="Hirakawa H."/>
            <person name="Kimoto M."/>
            <person name="Tabuchi M."/>
            <person name="Kishi F."/>
            <person name="Ouchi K."/>
            <person name="Shiba T."/>
            <person name="Ishii K."/>
            <person name="Hattori M."/>
            <person name="Kuhara S."/>
            <person name="Nakazawa T."/>
        </authorList>
    </citation>
    <scope>NUCLEOTIDE SEQUENCE [LARGE SCALE GENOMIC DNA]</scope>
    <source>
        <strain>J138</strain>
    </source>
</reference>
<reference key="4">
    <citation type="submission" date="2002-05" db="EMBL/GenBank/DDBJ databases">
        <title>The genome sequence of Chlamydia pneumoniae TW183 and comparison with other Chlamydia strains based on whole genome sequence analysis.</title>
        <authorList>
            <person name="Geng M.M."/>
            <person name="Schuhmacher A."/>
            <person name="Muehldorfer I."/>
            <person name="Bensch K.W."/>
            <person name="Schaefer K.P."/>
            <person name="Schneider S."/>
            <person name="Pohl T."/>
            <person name="Essig A."/>
            <person name="Marre R."/>
            <person name="Melchers K."/>
        </authorList>
    </citation>
    <scope>NUCLEOTIDE SEQUENCE [LARGE SCALE GENOMIC DNA]</scope>
    <source>
        <strain>TW-183</strain>
    </source>
</reference>
<organism>
    <name type="scientific">Chlamydia pneumoniae</name>
    <name type="common">Chlamydophila pneumoniae</name>
    <dbReference type="NCBI Taxonomy" id="83558"/>
    <lineage>
        <taxon>Bacteria</taxon>
        <taxon>Pseudomonadati</taxon>
        <taxon>Chlamydiota</taxon>
        <taxon>Chlamydiia</taxon>
        <taxon>Chlamydiales</taxon>
        <taxon>Chlamydiaceae</taxon>
        <taxon>Chlamydia/Chlamydophila group</taxon>
        <taxon>Chlamydia</taxon>
    </lineage>
</organism>
<dbReference type="EMBL" id="AE001363">
    <property type="protein sequence ID" value="AAD19129.1"/>
    <property type="molecule type" value="Genomic_DNA"/>
</dbReference>
<dbReference type="EMBL" id="AE002161">
    <property type="protein sequence ID" value="AAF38652.1"/>
    <property type="molecule type" value="Genomic_DNA"/>
</dbReference>
<dbReference type="EMBL" id="BA000008">
    <property type="protein sequence ID" value="BAA99199.1"/>
    <property type="molecule type" value="Genomic_DNA"/>
</dbReference>
<dbReference type="EMBL" id="AE009440">
    <property type="protein sequence ID" value="AAP98959.1"/>
    <property type="molecule type" value="Genomic_DNA"/>
</dbReference>
<dbReference type="PIR" id="A72011">
    <property type="entry name" value="A72011"/>
</dbReference>
<dbReference type="PIR" id="E86614">
    <property type="entry name" value="E86614"/>
</dbReference>
<dbReference type="RefSeq" id="NP_225186.1">
    <property type="nucleotide sequence ID" value="NC_000922.1"/>
</dbReference>
<dbReference type="RefSeq" id="WP_010883625.1">
    <property type="nucleotide sequence ID" value="NZ_LN847257.1"/>
</dbReference>
<dbReference type="SMR" id="Q9Z6R7"/>
<dbReference type="STRING" id="406984.CPK_ORF00417"/>
<dbReference type="GeneID" id="45051048"/>
<dbReference type="KEGG" id="cpa:CP_0863"/>
<dbReference type="KEGG" id="cpj:rl20"/>
<dbReference type="KEGG" id="cpn:CPn_0992"/>
<dbReference type="KEGG" id="cpt:CpB1030"/>
<dbReference type="PATRIC" id="fig|115713.3.peg.1087"/>
<dbReference type="eggNOG" id="COG0292">
    <property type="taxonomic scope" value="Bacteria"/>
</dbReference>
<dbReference type="HOGENOM" id="CLU_123265_0_1_0"/>
<dbReference type="OrthoDB" id="9808966at2"/>
<dbReference type="Proteomes" id="UP000000583">
    <property type="component" value="Chromosome"/>
</dbReference>
<dbReference type="Proteomes" id="UP000000801">
    <property type="component" value="Chromosome"/>
</dbReference>
<dbReference type="GO" id="GO:1990904">
    <property type="term" value="C:ribonucleoprotein complex"/>
    <property type="evidence" value="ECO:0007669"/>
    <property type="project" value="UniProtKB-KW"/>
</dbReference>
<dbReference type="GO" id="GO:0005840">
    <property type="term" value="C:ribosome"/>
    <property type="evidence" value="ECO:0007669"/>
    <property type="project" value="UniProtKB-KW"/>
</dbReference>
<dbReference type="GO" id="GO:0019843">
    <property type="term" value="F:rRNA binding"/>
    <property type="evidence" value="ECO:0007669"/>
    <property type="project" value="UniProtKB-UniRule"/>
</dbReference>
<dbReference type="GO" id="GO:0003735">
    <property type="term" value="F:structural constituent of ribosome"/>
    <property type="evidence" value="ECO:0007669"/>
    <property type="project" value="InterPro"/>
</dbReference>
<dbReference type="GO" id="GO:0000027">
    <property type="term" value="P:ribosomal large subunit assembly"/>
    <property type="evidence" value="ECO:0007669"/>
    <property type="project" value="UniProtKB-UniRule"/>
</dbReference>
<dbReference type="GO" id="GO:0006412">
    <property type="term" value="P:translation"/>
    <property type="evidence" value="ECO:0007669"/>
    <property type="project" value="InterPro"/>
</dbReference>
<dbReference type="CDD" id="cd07026">
    <property type="entry name" value="Ribosomal_L20"/>
    <property type="match status" value="1"/>
</dbReference>
<dbReference type="FunFam" id="1.10.1900.20:FF:000001">
    <property type="entry name" value="50S ribosomal protein L20"/>
    <property type="match status" value="1"/>
</dbReference>
<dbReference type="Gene3D" id="6.10.160.10">
    <property type="match status" value="1"/>
</dbReference>
<dbReference type="Gene3D" id="1.10.1900.20">
    <property type="entry name" value="Ribosomal protein L20"/>
    <property type="match status" value="1"/>
</dbReference>
<dbReference type="HAMAP" id="MF_00382">
    <property type="entry name" value="Ribosomal_bL20"/>
    <property type="match status" value="1"/>
</dbReference>
<dbReference type="InterPro" id="IPR005813">
    <property type="entry name" value="Ribosomal_bL20"/>
</dbReference>
<dbReference type="InterPro" id="IPR049946">
    <property type="entry name" value="RIBOSOMAL_L20_CS"/>
</dbReference>
<dbReference type="InterPro" id="IPR035566">
    <property type="entry name" value="Ribosomal_protein_bL20_C"/>
</dbReference>
<dbReference type="NCBIfam" id="TIGR01032">
    <property type="entry name" value="rplT_bact"/>
    <property type="match status" value="1"/>
</dbReference>
<dbReference type="PANTHER" id="PTHR10986">
    <property type="entry name" value="39S RIBOSOMAL PROTEIN L20"/>
    <property type="match status" value="1"/>
</dbReference>
<dbReference type="Pfam" id="PF00453">
    <property type="entry name" value="Ribosomal_L20"/>
    <property type="match status" value="1"/>
</dbReference>
<dbReference type="PRINTS" id="PR00062">
    <property type="entry name" value="RIBOSOMALL20"/>
</dbReference>
<dbReference type="SUPFAM" id="SSF74731">
    <property type="entry name" value="Ribosomal protein L20"/>
    <property type="match status" value="1"/>
</dbReference>
<dbReference type="PROSITE" id="PS00937">
    <property type="entry name" value="RIBOSOMAL_L20"/>
    <property type="match status" value="1"/>
</dbReference>
<keyword id="KW-0687">Ribonucleoprotein</keyword>
<keyword id="KW-0689">Ribosomal protein</keyword>
<keyword id="KW-0694">RNA-binding</keyword>
<keyword id="KW-0699">rRNA-binding</keyword>
<comment type="function">
    <text evidence="1">Binds directly to 23S ribosomal RNA and is necessary for the in vitro assembly process of the 50S ribosomal subunit. It is not involved in the protein synthesizing functions of that subunit (By similarity).</text>
</comment>
<comment type="similarity">
    <text evidence="2">Belongs to the bacterial ribosomal protein bL20 family.</text>
</comment>
<proteinExistence type="inferred from homology"/>
<evidence type="ECO:0000250" key="1"/>
<evidence type="ECO:0000305" key="2"/>
<feature type="chain" id="PRO_0000177142" description="Large ribosomal subunit protein bL20">
    <location>
        <begin position="1"/>
        <end position="121"/>
    </location>
</feature>
<sequence length="121" mass="13866">MVRATGSVASRRRRKRILKQAKGFWGDRKGHIRQSRSSVMRAMAFNYMHRKDRKGDFRSLWIARLNVASRIHSLSYSRLINGLKCANISLNRKMLSEIAIHNPEGFAEIANQAKKALEATV</sequence>